<organism>
    <name type="scientific">Gallus gallus</name>
    <name type="common">Chicken</name>
    <dbReference type="NCBI Taxonomy" id="9031"/>
    <lineage>
        <taxon>Eukaryota</taxon>
        <taxon>Metazoa</taxon>
        <taxon>Chordata</taxon>
        <taxon>Craniata</taxon>
        <taxon>Vertebrata</taxon>
        <taxon>Euteleostomi</taxon>
        <taxon>Archelosauria</taxon>
        <taxon>Archosauria</taxon>
        <taxon>Dinosauria</taxon>
        <taxon>Saurischia</taxon>
        <taxon>Theropoda</taxon>
        <taxon>Coelurosauria</taxon>
        <taxon>Aves</taxon>
        <taxon>Neognathae</taxon>
        <taxon>Galloanserae</taxon>
        <taxon>Galliformes</taxon>
        <taxon>Phasianidae</taxon>
        <taxon>Phasianinae</taxon>
        <taxon>Gallus</taxon>
    </lineage>
</organism>
<accession>Q6GVH4</accession>
<accession>Q5ZJV2</accession>
<protein>
    <recommendedName>
        <fullName>Gametogenetin-binding protein 2</fullName>
    </recommendedName>
    <alternativeName>
        <fullName>Protein ZNF403</fullName>
    </alternativeName>
</protein>
<dbReference type="EMBL" id="AJ720332">
    <property type="protein sequence ID" value="CAG31991.1"/>
    <property type="molecule type" value="mRNA"/>
</dbReference>
<dbReference type="EMBL" id="AY633743">
    <property type="protein sequence ID" value="AAT47122.1"/>
    <property type="molecule type" value="mRNA"/>
</dbReference>
<dbReference type="RefSeq" id="NP_001001899.1">
    <molecule id="Q6GVH4-1"/>
    <property type="nucleotide sequence ID" value="NM_001001899.2"/>
</dbReference>
<dbReference type="RefSeq" id="XP_015151295.1">
    <molecule id="Q6GVH4-2"/>
    <property type="nucleotide sequence ID" value="XM_015295809.4"/>
</dbReference>
<dbReference type="RefSeq" id="XP_046758379.1">
    <molecule id="Q6GVH4-2"/>
    <property type="nucleotide sequence ID" value="XM_046902423.1"/>
</dbReference>
<dbReference type="RefSeq" id="XP_046758380.1">
    <molecule id="Q6GVH4-1"/>
    <property type="nucleotide sequence ID" value="XM_046902424.1"/>
</dbReference>
<dbReference type="RefSeq" id="XP_046786133.1">
    <molecule id="Q6GVH4-2"/>
    <property type="nucleotide sequence ID" value="XM_046930177.1"/>
</dbReference>
<dbReference type="SMR" id="Q6GVH4"/>
<dbReference type="FunCoup" id="Q6GVH4">
    <property type="interactions" value="1998"/>
</dbReference>
<dbReference type="STRING" id="9031.ENSGALP00000066168"/>
<dbReference type="PaxDb" id="9031-ENSGALP00000008651"/>
<dbReference type="GeneID" id="425053"/>
<dbReference type="KEGG" id="gga:425053"/>
<dbReference type="CTD" id="79893"/>
<dbReference type="VEuPathDB" id="HostDB:geneid_425053"/>
<dbReference type="eggNOG" id="ENOG502QQ20">
    <property type="taxonomic scope" value="Eukaryota"/>
</dbReference>
<dbReference type="HOGENOM" id="CLU_024870_0_0_1"/>
<dbReference type="InParanoid" id="Q6GVH4"/>
<dbReference type="OrthoDB" id="2422440at2759"/>
<dbReference type="PhylomeDB" id="Q6GVH4"/>
<dbReference type="PRO" id="PR:Q6GVH4"/>
<dbReference type="Proteomes" id="UP000000539">
    <property type="component" value="Chromosome 19"/>
</dbReference>
<dbReference type="Bgee" id="ENSGALG00000005397">
    <property type="expression patterns" value="Expressed in testis and 13 other cell types or tissues"/>
</dbReference>
<dbReference type="GO" id="GO:0005737">
    <property type="term" value="C:cytoplasm"/>
    <property type="evidence" value="ECO:0000318"/>
    <property type="project" value="GO_Central"/>
</dbReference>
<dbReference type="GO" id="GO:0005634">
    <property type="term" value="C:nucleus"/>
    <property type="evidence" value="ECO:0000318"/>
    <property type="project" value="GO_Central"/>
</dbReference>
<dbReference type="GO" id="GO:0030154">
    <property type="term" value="P:cell differentiation"/>
    <property type="evidence" value="ECO:0007669"/>
    <property type="project" value="UniProtKB-KW"/>
</dbReference>
<dbReference type="GO" id="GO:0007283">
    <property type="term" value="P:spermatogenesis"/>
    <property type="evidence" value="ECO:0007669"/>
    <property type="project" value="UniProtKB-KW"/>
</dbReference>
<dbReference type="InterPro" id="IPR026073">
    <property type="entry name" value="GGNBP2"/>
</dbReference>
<dbReference type="PANTHER" id="PTHR13601">
    <property type="entry name" value="GAMETOGENETIN-BINDING PROTEIN 2"/>
    <property type="match status" value="1"/>
</dbReference>
<dbReference type="PANTHER" id="PTHR13601:SF2">
    <property type="entry name" value="GAMETOGENETIN-BINDING PROTEIN 2"/>
    <property type="match status" value="1"/>
</dbReference>
<comment type="function">
    <text evidence="1">May be involved in spermatogenesis.</text>
</comment>
<comment type="subcellular location">
    <subcellularLocation>
        <location evidence="1">Cytoplasm</location>
    </subcellularLocation>
</comment>
<comment type="alternative products">
    <event type="alternative splicing"/>
    <isoform>
        <id>Q6GVH4-1</id>
        <name>1</name>
        <sequence type="displayed"/>
    </isoform>
    <isoform>
        <id>Q6GVH4-2</id>
        <name>2</name>
        <sequence type="described" ref="VSP_019181"/>
    </isoform>
</comment>
<evidence type="ECO:0000250" key="1"/>
<evidence type="ECO:0000256" key="2">
    <source>
        <dbReference type="SAM" id="MobiDB-lite"/>
    </source>
</evidence>
<evidence type="ECO:0000303" key="3">
    <source>
    </source>
</evidence>
<evidence type="ECO:0000305" key="4"/>
<name>GGNB2_CHICK</name>
<gene>
    <name type="primary">GGNBP2</name>
    <name type="synonym">ZNF403</name>
    <name type="ORF">RCJMB04_15h5</name>
</gene>
<proteinExistence type="evidence at transcript level"/>
<feature type="chain" id="PRO_0000239351" description="Gametogenetin-binding protein 2">
    <location>
        <begin position="1"/>
        <end position="698"/>
    </location>
</feature>
<feature type="region of interest" description="Disordered" evidence="2">
    <location>
        <begin position="555"/>
        <end position="575"/>
    </location>
</feature>
<feature type="splice variant" id="VSP_019181" description="In isoform 2." evidence="3">
    <original>G</original>
    <variation>GYE</variation>
    <location>
        <position position="282"/>
    </location>
</feature>
<feature type="sequence conflict" description="In Ref. 2; AAT47122." evidence="4" ref="2">
    <original>V</original>
    <variation>I</variation>
    <location>
        <position position="104"/>
    </location>
</feature>
<feature type="sequence conflict" description="In Ref. 2; AAT47122." evidence="4" ref="2">
    <original>S</original>
    <variation>P</variation>
    <location>
        <position position="123"/>
    </location>
</feature>
<sequence>MARLVAVCRDGEEEFPFEKRQIPLYIDDTLTMVMEFPDNVLNLDGHQNNGAQLKQFIQRHSMLKQQDLNIAMMVTSREVLSALSQLVPCVGCRRSVERLFSQLVESGNPALEPLAVGPKGVLSVTRSCMTDAKKLYTLFYVHGSKLNDMIDAIPKSKKNKRCQLHSLDTHKPKPLGGCWMDVWELMSQECRDEVVLIDSSCLLETLETYLRKHRFCTDCKNKVLRAYNILIGELDCSKEKGYCAALYEGLRCCPHERHIHVCCETDFIAHLLGRAEPEFAGGRRERHAKTIDIAQEEVLTCLGIHLYERLHRIWQKLRAEEQTWQMLFYLGVDALRKSFEMAVEKVQGISRLEQLCEEFSEEERVRELKQEKKRQKRKNRRKNKCVCEIPTPLQAAEEKEINQAKENLDFTENSCKACGSTEEANNCVEVIVTNESTSCTCPSSGTLLGSPKIKKGLSPHCNGSDCGYSSSMEGSETGSREGSDVACTEGICNHDENGDDSCVHRCDDKEEDGDSCVECWANSEESNTKGKNKKKKKKSKTLKCENEHIQKLGSCMADPGNRETSGNTTHTEFHRDKTKDTHAESCCSSEKSGQQLPWFEHMKNVSQFAEPTEMSLVPDTGKGAKSLVELLDESECTSDEEIFISQDEIQSFMANNKSFYSNREQYRQHLKEKFNKYCRLNDHKRPICNGWLTTAGAN</sequence>
<keyword id="KW-0025">Alternative splicing</keyword>
<keyword id="KW-0963">Cytoplasm</keyword>
<keyword id="KW-0217">Developmental protein</keyword>
<keyword id="KW-0221">Differentiation</keyword>
<keyword id="KW-1185">Reference proteome</keyword>
<keyword id="KW-0744">Spermatogenesis</keyword>
<reference key="1">
    <citation type="journal article" date="2005" name="FEBS Lett.">
        <title>Yeast two-hybrid screens imply that GGNBP1, GGNBP2 and OAZ3 are potential interaction partners of testicular germ cell-specific protein GGN1.</title>
        <authorList>
            <person name="Zhang J."/>
            <person name="Wang Y."/>
            <person name="Zhou Y."/>
            <person name="Cao Z."/>
            <person name="Huang P."/>
            <person name="Lu B."/>
        </authorList>
    </citation>
    <scope>NUCLEOTIDE SEQUENCE [MRNA] (ISOFORM 1)</scope>
    <source>
        <strain>CB</strain>
        <tissue>Bursa of Fabricius</tissue>
    </source>
</reference>
<reference key="2">
    <citation type="journal article" date="2005" name="Genome Biol.">
        <title>Full-length cDNAs from chicken bursal lymphocytes to facilitate gene function analysis.</title>
        <authorList>
            <person name="Caldwell R.B."/>
            <person name="Kierzek A.M."/>
            <person name="Arakawa H."/>
            <person name="Bezzubov Y."/>
            <person name="Zaim J."/>
            <person name="Fiedler P."/>
            <person name="Kutter S."/>
            <person name="Blagodatski A."/>
            <person name="Kostovska D."/>
            <person name="Koter M."/>
            <person name="Plachy J."/>
            <person name="Carninci P."/>
            <person name="Hayashizaki Y."/>
            <person name="Buerstedde J.-M."/>
        </authorList>
    </citation>
    <scope>NUCLEOTIDE SEQUENCE [LARGE SCALE MRNA] (ISOFORM 2)</scope>
    <source>
        <strain>CB</strain>
        <tissue>Bursa of Fabricius</tissue>
    </source>
</reference>